<keyword id="KW-0963">Cytoplasm</keyword>
<keyword id="KW-1185">Reference proteome</keyword>
<keyword id="KW-0690">Ribosome biogenesis</keyword>
<reference key="1">
    <citation type="submission" date="2005-09" db="EMBL/GenBank/DDBJ databases">
        <title>Complete sequence of chromosome 1 of Rhodobacter sphaeroides 2.4.1.</title>
        <authorList>
            <person name="Copeland A."/>
            <person name="Lucas S."/>
            <person name="Lapidus A."/>
            <person name="Barry K."/>
            <person name="Detter J.C."/>
            <person name="Glavina T."/>
            <person name="Hammon N."/>
            <person name="Israni S."/>
            <person name="Pitluck S."/>
            <person name="Richardson P."/>
            <person name="Mackenzie C."/>
            <person name="Choudhary M."/>
            <person name="Larimer F."/>
            <person name="Hauser L.J."/>
            <person name="Land M."/>
            <person name="Donohue T.J."/>
            <person name="Kaplan S."/>
        </authorList>
    </citation>
    <scope>NUCLEOTIDE SEQUENCE [LARGE SCALE GENOMIC DNA]</scope>
    <source>
        <strain>ATCC 17023 / DSM 158 / JCM 6121 / CCUG 31486 / LMG 2827 / NBRC 12203 / NCIMB 8253 / ATH 2.4.1.</strain>
    </source>
</reference>
<proteinExistence type="inferred from homology"/>
<name>RBFA_CERS4</name>
<comment type="function">
    <text evidence="1">One of several proteins that assist in the late maturation steps of the functional core of the 30S ribosomal subunit. Associates with free 30S ribosomal subunits (but not with 30S subunits that are part of 70S ribosomes or polysomes). Required for efficient processing of 16S rRNA. May interact with the 5'-terminal helix region of 16S rRNA.</text>
</comment>
<comment type="subunit">
    <text evidence="1">Monomer. Binds 30S ribosomal subunits, but not 50S ribosomal subunits or 70S ribosomes.</text>
</comment>
<comment type="subcellular location">
    <subcellularLocation>
        <location evidence="1">Cytoplasm</location>
    </subcellularLocation>
</comment>
<comment type="similarity">
    <text evidence="1">Belongs to the RbfA family.</text>
</comment>
<gene>
    <name evidence="1" type="primary">rbfA</name>
    <name type="ordered locus">RHOS4_27230</name>
    <name type="ordered locus">RSP_1106</name>
</gene>
<accession>Q3IYU3</accession>
<feature type="chain" id="PRO_0000321243" description="Ribosome-binding factor A">
    <location>
        <begin position="1"/>
        <end position="140"/>
    </location>
</feature>
<organism>
    <name type="scientific">Cereibacter sphaeroides (strain ATCC 17023 / DSM 158 / JCM 6121 / CCUG 31486 / LMG 2827 / NBRC 12203 / NCIMB 8253 / ATH 2.4.1.)</name>
    <name type="common">Rhodobacter sphaeroides</name>
    <dbReference type="NCBI Taxonomy" id="272943"/>
    <lineage>
        <taxon>Bacteria</taxon>
        <taxon>Pseudomonadati</taxon>
        <taxon>Pseudomonadota</taxon>
        <taxon>Alphaproteobacteria</taxon>
        <taxon>Rhodobacterales</taxon>
        <taxon>Paracoccaceae</taxon>
        <taxon>Cereibacter</taxon>
    </lineage>
</organism>
<protein>
    <recommendedName>
        <fullName evidence="1">Ribosome-binding factor A</fullName>
    </recommendedName>
</protein>
<evidence type="ECO:0000255" key="1">
    <source>
        <dbReference type="HAMAP-Rule" id="MF_00003"/>
    </source>
</evidence>
<sequence>MGPMAHRSHTGTGPSQRQLRVGELIRRTLADVLNRGEIHDPELNRLSITVGEVRCSPDLKVATVHVMPLGGKDVEEAISLLSKHRGELRHHITRQMTLKYAPDLRFRPDETFDRLDETRRLFSDKTVMRDIRGGGEADED</sequence>
<dbReference type="EMBL" id="CP000143">
    <property type="protein sequence ID" value="ABA80291.1"/>
    <property type="molecule type" value="Genomic_DNA"/>
</dbReference>
<dbReference type="RefSeq" id="YP_354192.1">
    <property type="nucleotide sequence ID" value="NC_007493.2"/>
</dbReference>
<dbReference type="SMR" id="Q3IYU3"/>
<dbReference type="STRING" id="272943.RSP_1106"/>
<dbReference type="EnsemblBacteria" id="ABA80291">
    <property type="protein sequence ID" value="ABA80291"/>
    <property type="gene ID" value="RSP_1106"/>
</dbReference>
<dbReference type="KEGG" id="rsp:RSP_1106"/>
<dbReference type="PATRIC" id="fig|272943.9.peg.3084"/>
<dbReference type="eggNOG" id="COG0858">
    <property type="taxonomic scope" value="Bacteria"/>
</dbReference>
<dbReference type="OrthoDB" id="9805051at2"/>
<dbReference type="PhylomeDB" id="Q3IYU3"/>
<dbReference type="Proteomes" id="UP000002703">
    <property type="component" value="Chromosome 1"/>
</dbReference>
<dbReference type="GO" id="GO:0005829">
    <property type="term" value="C:cytosol"/>
    <property type="evidence" value="ECO:0007669"/>
    <property type="project" value="TreeGrafter"/>
</dbReference>
<dbReference type="GO" id="GO:0043024">
    <property type="term" value="F:ribosomal small subunit binding"/>
    <property type="evidence" value="ECO:0007669"/>
    <property type="project" value="TreeGrafter"/>
</dbReference>
<dbReference type="GO" id="GO:0030490">
    <property type="term" value="P:maturation of SSU-rRNA"/>
    <property type="evidence" value="ECO:0007669"/>
    <property type="project" value="UniProtKB-UniRule"/>
</dbReference>
<dbReference type="Gene3D" id="3.30.300.20">
    <property type="match status" value="1"/>
</dbReference>
<dbReference type="HAMAP" id="MF_00003">
    <property type="entry name" value="RbfA"/>
    <property type="match status" value="1"/>
</dbReference>
<dbReference type="InterPro" id="IPR015946">
    <property type="entry name" value="KH_dom-like_a/b"/>
</dbReference>
<dbReference type="InterPro" id="IPR000238">
    <property type="entry name" value="RbfA"/>
</dbReference>
<dbReference type="InterPro" id="IPR023799">
    <property type="entry name" value="RbfA_dom_sf"/>
</dbReference>
<dbReference type="InterPro" id="IPR020053">
    <property type="entry name" value="Ribosome-bd_factorA_CS"/>
</dbReference>
<dbReference type="NCBIfam" id="NF001802">
    <property type="entry name" value="PRK00521.2-5"/>
    <property type="match status" value="1"/>
</dbReference>
<dbReference type="NCBIfam" id="TIGR00082">
    <property type="entry name" value="rbfA"/>
    <property type="match status" value="1"/>
</dbReference>
<dbReference type="PANTHER" id="PTHR33515">
    <property type="entry name" value="RIBOSOME-BINDING FACTOR A, CHLOROPLASTIC-RELATED"/>
    <property type="match status" value="1"/>
</dbReference>
<dbReference type="PANTHER" id="PTHR33515:SF1">
    <property type="entry name" value="RIBOSOME-BINDING FACTOR A, CHLOROPLASTIC-RELATED"/>
    <property type="match status" value="1"/>
</dbReference>
<dbReference type="Pfam" id="PF02033">
    <property type="entry name" value="RBFA"/>
    <property type="match status" value="1"/>
</dbReference>
<dbReference type="SUPFAM" id="SSF89919">
    <property type="entry name" value="Ribosome-binding factor A, RbfA"/>
    <property type="match status" value="1"/>
</dbReference>
<dbReference type="PROSITE" id="PS01319">
    <property type="entry name" value="RBFA"/>
    <property type="match status" value="1"/>
</dbReference>